<proteinExistence type="inferred from homology"/>
<sequence>MYRAITRNIQVTATPRYVAERSEPDQGRHFWAYTVEVANLGQETVQLKGRHWVITDANGHTEEVHGAGVVGEEPTLPPGGRFEYTSGVPLNTSTGIMSGHYEMLADNGETFSIEIPAFSLDVPDVRRVLN</sequence>
<keyword id="KW-1185">Reference proteome</keyword>
<evidence type="ECO:0000255" key="1">
    <source>
        <dbReference type="HAMAP-Rule" id="MF_00791"/>
    </source>
</evidence>
<feature type="chain" id="PRO_1000133821" description="Protein ApaG">
    <location>
        <begin position="1"/>
        <end position="130"/>
    </location>
</feature>
<feature type="domain" description="ApaG" evidence="1">
    <location>
        <begin position="3"/>
        <end position="127"/>
    </location>
</feature>
<reference key="1">
    <citation type="submission" date="2007-07" db="EMBL/GenBank/DDBJ databases">
        <title>Complete sequence of chromosome of Xanthobacter autotrophicus Py2.</title>
        <authorList>
            <consortium name="US DOE Joint Genome Institute"/>
            <person name="Copeland A."/>
            <person name="Lucas S."/>
            <person name="Lapidus A."/>
            <person name="Barry K."/>
            <person name="Glavina del Rio T."/>
            <person name="Hammon N."/>
            <person name="Israni S."/>
            <person name="Dalin E."/>
            <person name="Tice H."/>
            <person name="Pitluck S."/>
            <person name="Sims D."/>
            <person name="Brettin T."/>
            <person name="Bruce D."/>
            <person name="Detter J.C."/>
            <person name="Han C."/>
            <person name="Tapia R."/>
            <person name="Brainard J."/>
            <person name="Schmutz J."/>
            <person name="Larimer F."/>
            <person name="Land M."/>
            <person name="Hauser L."/>
            <person name="Kyrpides N."/>
            <person name="Kim E."/>
            <person name="Ensigns S.A."/>
            <person name="Richardson P."/>
        </authorList>
    </citation>
    <scope>NUCLEOTIDE SEQUENCE [LARGE SCALE GENOMIC DNA]</scope>
    <source>
        <strain>ATCC BAA-1158 / Py2</strain>
    </source>
</reference>
<dbReference type="EMBL" id="CP000781">
    <property type="protein sequence ID" value="ABS65728.1"/>
    <property type="molecule type" value="Genomic_DNA"/>
</dbReference>
<dbReference type="SMR" id="A7ICI5"/>
<dbReference type="STRING" id="78245.Xaut_0470"/>
<dbReference type="KEGG" id="xau:Xaut_0470"/>
<dbReference type="eggNOG" id="COG2967">
    <property type="taxonomic scope" value="Bacteria"/>
</dbReference>
<dbReference type="HOGENOM" id="CLU_128074_0_0_5"/>
<dbReference type="OrthoDB" id="9795226at2"/>
<dbReference type="PhylomeDB" id="A7ICI5"/>
<dbReference type="Proteomes" id="UP000002417">
    <property type="component" value="Chromosome"/>
</dbReference>
<dbReference type="GO" id="GO:0070987">
    <property type="term" value="P:error-free translesion synthesis"/>
    <property type="evidence" value="ECO:0007669"/>
    <property type="project" value="TreeGrafter"/>
</dbReference>
<dbReference type="Gene3D" id="2.60.40.1470">
    <property type="entry name" value="ApaG domain"/>
    <property type="match status" value="1"/>
</dbReference>
<dbReference type="HAMAP" id="MF_00791">
    <property type="entry name" value="ApaG"/>
    <property type="match status" value="1"/>
</dbReference>
<dbReference type="InterPro" id="IPR007474">
    <property type="entry name" value="ApaG_domain"/>
</dbReference>
<dbReference type="InterPro" id="IPR036767">
    <property type="entry name" value="ApaG_sf"/>
</dbReference>
<dbReference type="InterPro" id="IPR023065">
    <property type="entry name" value="Uncharacterised_ApaG"/>
</dbReference>
<dbReference type="NCBIfam" id="NF003967">
    <property type="entry name" value="PRK05461.1"/>
    <property type="match status" value="1"/>
</dbReference>
<dbReference type="PANTHER" id="PTHR14289">
    <property type="entry name" value="F-BOX ONLY PROTEIN 3"/>
    <property type="match status" value="1"/>
</dbReference>
<dbReference type="PANTHER" id="PTHR14289:SF16">
    <property type="entry name" value="POLYMERASE DELTA-INTERACTING PROTEIN 2"/>
    <property type="match status" value="1"/>
</dbReference>
<dbReference type="Pfam" id="PF04379">
    <property type="entry name" value="DUF525"/>
    <property type="match status" value="1"/>
</dbReference>
<dbReference type="SUPFAM" id="SSF110069">
    <property type="entry name" value="ApaG-like"/>
    <property type="match status" value="1"/>
</dbReference>
<dbReference type="PROSITE" id="PS51087">
    <property type="entry name" value="APAG"/>
    <property type="match status" value="1"/>
</dbReference>
<accession>A7ICI5</accession>
<protein>
    <recommendedName>
        <fullName evidence="1">Protein ApaG</fullName>
    </recommendedName>
</protein>
<organism>
    <name type="scientific">Xanthobacter autotrophicus (strain ATCC BAA-1158 / Py2)</name>
    <dbReference type="NCBI Taxonomy" id="78245"/>
    <lineage>
        <taxon>Bacteria</taxon>
        <taxon>Pseudomonadati</taxon>
        <taxon>Pseudomonadota</taxon>
        <taxon>Alphaproteobacteria</taxon>
        <taxon>Hyphomicrobiales</taxon>
        <taxon>Xanthobacteraceae</taxon>
        <taxon>Xanthobacter</taxon>
    </lineage>
</organism>
<gene>
    <name evidence="1" type="primary">apaG</name>
    <name type="ordered locus">Xaut_0470</name>
</gene>
<name>APAG_XANP2</name>